<comment type="function">
    <text evidence="1">May act as a scaffolding protein within caveolar membranes. Interacts directly with G-protein alpha subunits and can functionally regulate their activity. Acts as an accessory protein in conjunction with CAV1 in targeting to lipid rafts and driving caveolae formation. The Ser-36 phosphorylated form has a role in modulating mitosis in endothelial cells. Positive regulator of cellular mitogenesis of the MAPK signaling pathway. Required for the insulin-stimulated nuclear translocation and activation of MAPK1 and STAT3, and the subsequent regulation of cell cycle progression (By similarity).</text>
</comment>
<comment type="subunit">
    <text evidence="1">Monomer or homodimer (By similarity). Interacts with CAV1; the interaction forms a stable heterooligomeric complex that is required for targeting to lipid rafts and for caveolae formation. Tyrosine phosphorylated forms do not form heterooligomers with the Tyr-19-phosphorylated form existing as a monomer or dimer, and the Tyr-27-form as a monomer only. Interacts (tyrosine phosphorylated form) with the SH2 domain-containing proteins, RASA1, NCK1 and SRC. Interacts (tyrosine phosphorylated form) with INSR, the interaction (Tyr-27-phosphorylated form) is increased on insulin stimulation. Interacts (Tyr-19 phosphorylated form) with MAPK1 (phosphorylated form); the interaction, promoted by insulin, leads to nuclear location and MAPK1 activation. Interacts with STAT3; the interaction is increased on insulin-induced tyrosine phosphorylation leading to STAT activation (By similarity).</text>
</comment>
<comment type="subcellular location">
    <subcellularLocation>
        <location evidence="1">Nucleus</location>
    </subcellularLocation>
    <subcellularLocation>
        <location evidence="1">Cytoplasm</location>
    </subcellularLocation>
    <subcellularLocation>
        <location>Golgi apparatus membrane</location>
        <topology>Peripheral membrane protein</topology>
    </subcellularLocation>
    <subcellularLocation>
        <location>Cell membrane</location>
        <topology>Peripheral membrane protein</topology>
    </subcellularLocation>
    <subcellularLocation>
        <location>Membrane</location>
        <location>Caveola</location>
        <topology>Peripheral membrane protein</topology>
    </subcellularLocation>
    <text evidence="1">Potential hairpin-like structure in the membrane. Membrane protein of caveolae. Tyr-19-phosphorylated form is enriched at sites of cell-cell contact and is translocated to the nucleus in complex with MAPK1 in response to insulin (By similarity). Tyr-27-phosphorylated form is located both in the cytoplasm and plasma membrane. CAV1-mediated Ser-23-phosphorylated form locates to the plasma membrane. Ser-36-phosphorylated form resides in intracellular compartments.</text>
</comment>
<comment type="PTM">
    <text evidence="1">Phosphorylated on serine and tyrosine residues. CAV1 promotes phosphorylation on Ser-23 which then targets the complex to the plasma membrane, lipid rafts and caveolae. Phosphorylation on Ser-36 appears to modulate mitosis in endothelial cells (By similarity). Phosphorylation on both Tyr-19 and Tyr-27 is required for insulin-induced 'Ser-727' phosphorylation of STAT3 and its activation. Phosphorylation on Tyr-19 is required for insulin-induced phosphorylation of MAPK1 and DNA binding of STAT3. Tyrosine phosphorylation is induced by both EGF and insulin (By. similarity).</text>
</comment>
<comment type="similarity">
    <text evidence="5">Belongs to the caveolin family.</text>
</comment>
<sequence>MGLETEKADVQLFMDDDAYSRHSGVDYADLDKFADSGSDRDPHRLNSHLKVGFEDVIAEPVTTHSFDKVWICSHALFEISKYVIYKFLTFFLAIPMAFAAGILFAILSCLHIWIIMPFVKTCLMVLPSVQTIWKTITDVVIAPLCTSVGRSFSSISLQLSHD</sequence>
<evidence type="ECO:0000250" key="1"/>
<evidence type="ECO:0000250" key="2">
    <source>
        <dbReference type="UniProtKB" id="P51636"/>
    </source>
</evidence>
<evidence type="ECO:0000250" key="3">
    <source>
        <dbReference type="UniProtKB" id="Q9WVC3"/>
    </source>
</evidence>
<evidence type="ECO:0000255" key="4"/>
<evidence type="ECO:0000305" key="5"/>
<organism>
    <name type="scientific">Mustela putorius furo</name>
    <name type="common">European domestic ferret</name>
    <name type="synonym">Mustela furo</name>
    <dbReference type="NCBI Taxonomy" id="9669"/>
    <lineage>
        <taxon>Eukaryota</taxon>
        <taxon>Metazoa</taxon>
        <taxon>Chordata</taxon>
        <taxon>Craniata</taxon>
        <taxon>Vertebrata</taxon>
        <taxon>Euteleostomi</taxon>
        <taxon>Mammalia</taxon>
        <taxon>Eutheria</taxon>
        <taxon>Laurasiatheria</taxon>
        <taxon>Carnivora</taxon>
        <taxon>Caniformia</taxon>
        <taxon>Musteloidea</taxon>
        <taxon>Mustelidae</taxon>
        <taxon>Mustelinae</taxon>
        <taxon>Mustela</taxon>
    </lineage>
</organism>
<gene>
    <name type="primary">CAV2</name>
</gene>
<name>CAV2_MUSPF</name>
<reference key="1">
    <citation type="submission" date="2006-09" db="EMBL/GenBank/DDBJ databases">
        <title>NISC comparative sequencing initiative.</title>
        <authorList>
            <person name="Antonellis A."/>
            <person name="Ayele K."/>
            <person name="Benjamin B."/>
            <person name="Blakesley R.W."/>
            <person name="Boakye A."/>
            <person name="Bouffard G.G."/>
            <person name="Brinkley C."/>
            <person name="Brooks S."/>
            <person name="Chu G."/>
            <person name="Coleman H."/>
            <person name="Engle J."/>
            <person name="Gestole M."/>
            <person name="Greene A."/>
            <person name="Guan X."/>
            <person name="Gupta J."/>
            <person name="Haghighi P."/>
            <person name="Han J."/>
            <person name="Hansen N."/>
            <person name="Ho S.-L."/>
            <person name="Hu P."/>
            <person name="Hunter G."/>
            <person name="Hurle B."/>
            <person name="Idol J.R."/>
            <person name="Kwong P."/>
            <person name="Laric P."/>
            <person name="Larson S."/>
            <person name="Lee-Lin S.-Q."/>
            <person name="Legaspi R."/>
            <person name="Madden M."/>
            <person name="Maduro Q.L."/>
            <person name="Maduro V.B."/>
            <person name="Margulies E.H."/>
            <person name="Masiello C."/>
            <person name="Maskeri B."/>
            <person name="McDowell J."/>
            <person name="Mojidi H.A."/>
            <person name="Mullikin J.C."/>
            <person name="Oestreicher J.S."/>
            <person name="Park M."/>
            <person name="Portnoy M.E."/>
            <person name="Prasad A."/>
            <person name="Puri O."/>
            <person name="Reddix-Dugue N."/>
            <person name="Schandler K."/>
            <person name="Schueler M.G."/>
            <person name="Sison C."/>
            <person name="Stantripop S."/>
            <person name="Stephen E."/>
            <person name="Taye A."/>
            <person name="Thomas J.W."/>
            <person name="Thomas P.J."/>
            <person name="Tsipouri V."/>
            <person name="Ung L."/>
            <person name="Vogt J.L."/>
            <person name="Wetherby K.D."/>
            <person name="Young A."/>
            <person name="Green E.D."/>
        </authorList>
    </citation>
    <scope>NUCLEOTIDE SEQUENCE [LARGE SCALE GENOMIC DNA]</scope>
</reference>
<dbReference type="EMBL" id="DP000183">
    <property type="protein sequence ID" value="ABI93650.1"/>
    <property type="molecule type" value="Genomic_DNA"/>
</dbReference>
<dbReference type="RefSeq" id="XP_004741980.1">
    <property type="nucleotide sequence ID" value="XM_004741923.3"/>
</dbReference>
<dbReference type="SMR" id="Q07E26"/>
<dbReference type="FunCoup" id="Q07E26">
    <property type="interactions" value="48"/>
</dbReference>
<dbReference type="STRING" id="9669.ENSMPUP00000007174"/>
<dbReference type="GeneID" id="101676645"/>
<dbReference type="KEGG" id="mpuf:101676645"/>
<dbReference type="CTD" id="858"/>
<dbReference type="eggNOG" id="ENOG502RZYX">
    <property type="taxonomic scope" value="Eukaryota"/>
</dbReference>
<dbReference type="HOGENOM" id="CLU_102582_2_0_1"/>
<dbReference type="InParanoid" id="Q07E26"/>
<dbReference type="OMA" id="TRIFMDD"/>
<dbReference type="OrthoDB" id="5917823at2759"/>
<dbReference type="Proteomes" id="UP000000715">
    <property type="component" value="Unplaced"/>
</dbReference>
<dbReference type="GO" id="GO:0002080">
    <property type="term" value="C:acrosomal membrane"/>
    <property type="evidence" value="ECO:0007669"/>
    <property type="project" value="Ensembl"/>
</dbReference>
<dbReference type="GO" id="GO:0005901">
    <property type="term" value="C:caveola"/>
    <property type="evidence" value="ECO:0000250"/>
    <property type="project" value="UniProtKB"/>
</dbReference>
<dbReference type="GO" id="GO:0002095">
    <property type="term" value="C:caveolar macromolecular signaling complex"/>
    <property type="evidence" value="ECO:0007669"/>
    <property type="project" value="Ensembl"/>
</dbReference>
<dbReference type="GO" id="GO:0005925">
    <property type="term" value="C:focal adhesion"/>
    <property type="evidence" value="ECO:0007669"/>
    <property type="project" value="Ensembl"/>
</dbReference>
<dbReference type="GO" id="GO:0000139">
    <property type="term" value="C:Golgi membrane"/>
    <property type="evidence" value="ECO:0007669"/>
    <property type="project" value="UniProtKB-SubCell"/>
</dbReference>
<dbReference type="GO" id="GO:0005634">
    <property type="term" value="C:nucleus"/>
    <property type="evidence" value="ECO:0007669"/>
    <property type="project" value="UniProtKB-SubCell"/>
</dbReference>
<dbReference type="GO" id="GO:0048471">
    <property type="term" value="C:perinuclear region of cytoplasm"/>
    <property type="evidence" value="ECO:0000250"/>
    <property type="project" value="UniProtKB"/>
</dbReference>
<dbReference type="GO" id="GO:0044853">
    <property type="term" value="C:plasma membrane raft"/>
    <property type="evidence" value="ECO:0000250"/>
    <property type="project" value="UniProtKB"/>
</dbReference>
<dbReference type="GO" id="GO:0042383">
    <property type="term" value="C:sarcolemma"/>
    <property type="evidence" value="ECO:0007669"/>
    <property type="project" value="TreeGrafter"/>
</dbReference>
<dbReference type="GO" id="GO:0030133">
    <property type="term" value="C:transport vesicle"/>
    <property type="evidence" value="ECO:0007669"/>
    <property type="project" value="Ensembl"/>
</dbReference>
<dbReference type="GO" id="GO:0031748">
    <property type="term" value="F:D1 dopamine receptor binding"/>
    <property type="evidence" value="ECO:0000250"/>
    <property type="project" value="UniProtKB"/>
</dbReference>
<dbReference type="GO" id="GO:0046982">
    <property type="term" value="F:protein heterodimerization activity"/>
    <property type="evidence" value="ECO:0007669"/>
    <property type="project" value="Ensembl"/>
</dbReference>
<dbReference type="GO" id="GO:0042803">
    <property type="term" value="F:protein homodimerization activity"/>
    <property type="evidence" value="ECO:0007669"/>
    <property type="project" value="Ensembl"/>
</dbReference>
<dbReference type="GO" id="GO:0019901">
    <property type="term" value="F:protein kinase binding"/>
    <property type="evidence" value="ECO:0007669"/>
    <property type="project" value="Ensembl"/>
</dbReference>
<dbReference type="GO" id="GO:0030674">
    <property type="term" value="F:protein-macromolecule adaptor activity"/>
    <property type="evidence" value="ECO:0007669"/>
    <property type="project" value="Ensembl"/>
</dbReference>
<dbReference type="GO" id="GO:0097110">
    <property type="term" value="F:scaffold protein binding"/>
    <property type="evidence" value="ECO:0007669"/>
    <property type="project" value="Ensembl"/>
</dbReference>
<dbReference type="GO" id="GO:0071711">
    <property type="term" value="P:basement membrane organization"/>
    <property type="evidence" value="ECO:0007669"/>
    <property type="project" value="Ensembl"/>
</dbReference>
<dbReference type="GO" id="GO:0070836">
    <property type="term" value="P:caveola assembly"/>
    <property type="evidence" value="ECO:0000250"/>
    <property type="project" value="UniProtKB"/>
</dbReference>
<dbReference type="GO" id="GO:0007029">
    <property type="term" value="P:endoplasmic reticulum organization"/>
    <property type="evidence" value="ECO:0000250"/>
    <property type="project" value="UniProtKB"/>
</dbReference>
<dbReference type="GO" id="GO:0001935">
    <property type="term" value="P:endothelial cell proliferation"/>
    <property type="evidence" value="ECO:0007669"/>
    <property type="project" value="Ensembl"/>
</dbReference>
<dbReference type="GO" id="GO:0008286">
    <property type="term" value="P:insulin receptor signaling pathway"/>
    <property type="evidence" value="ECO:0007669"/>
    <property type="project" value="Ensembl"/>
</dbReference>
<dbReference type="GO" id="GO:0007005">
    <property type="term" value="P:mitochondrion organization"/>
    <property type="evidence" value="ECO:0000250"/>
    <property type="project" value="UniProtKB"/>
</dbReference>
<dbReference type="GO" id="GO:0001937">
    <property type="term" value="P:negative regulation of endothelial cell proliferation"/>
    <property type="evidence" value="ECO:0000250"/>
    <property type="project" value="UniProtKB"/>
</dbReference>
<dbReference type="GO" id="GO:0014859">
    <property type="term" value="P:negative regulation of skeletal muscle cell proliferation"/>
    <property type="evidence" value="ECO:0007669"/>
    <property type="project" value="Ensembl"/>
</dbReference>
<dbReference type="GO" id="GO:0030512">
    <property type="term" value="P:negative regulation of transforming growth factor beta receptor signaling pathway"/>
    <property type="evidence" value="ECO:0007669"/>
    <property type="project" value="Ensembl"/>
</dbReference>
<dbReference type="GO" id="GO:0044794">
    <property type="term" value="P:positive regulation by host of viral process"/>
    <property type="evidence" value="ECO:0007669"/>
    <property type="project" value="Ensembl"/>
</dbReference>
<dbReference type="GO" id="GO:0060161">
    <property type="term" value="P:positive regulation of dopamine receptor signaling pathway"/>
    <property type="evidence" value="ECO:0000250"/>
    <property type="project" value="UniProtKB"/>
</dbReference>
<dbReference type="GO" id="GO:0001938">
    <property type="term" value="P:positive regulation of endothelial cell proliferation"/>
    <property type="evidence" value="ECO:0007669"/>
    <property type="project" value="Ensembl"/>
</dbReference>
<dbReference type="GO" id="GO:0043410">
    <property type="term" value="P:positive regulation of MAPK cascade"/>
    <property type="evidence" value="ECO:0007669"/>
    <property type="project" value="Ensembl"/>
</dbReference>
<dbReference type="GO" id="GO:0019065">
    <property type="term" value="P:receptor-mediated endocytosis of virus by host cell"/>
    <property type="evidence" value="ECO:0007669"/>
    <property type="project" value="Ensembl"/>
</dbReference>
<dbReference type="GO" id="GO:0051480">
    <property type="term" value="P:regulation of cytosolic calcium ion concentration"/>
    <property type="evidence" value="ECO:0007669"/>
    <property type="project" value="TreeGrafter"/>
</dbReference>
<dbReference type="GO" id="GO:0007088">
    <property type="term" value="P:regulation of mitotic nuclear division"/>
    <property type="evidence" value="ECO:0007669"/>
    <property type="project" value="Ensembl"/>
</dbReference>
<dbReference type="GO" id="GO:0014856">
    <property type="term" value="P:skeletal muscle cell proliferation"/>
    <property type="evidence" value="ECO:0007669"/>
    <property type="project" value="Ensembl"/>
</dbReference>
<dbReference type="GO" id="GO:0048741">
    <property type="term" value="P:skeletal muscle fiber development"/>
    <property type="evidence" value="ECO:0000250"/>
    <property type="project" value="UniProtKB"/>
</dbReference>
<dbReference type="GO" id="GO:0007179">
    <property type="term" value="P:transforming growth factor beta receptor signaling pathway"/>
    <property type="evidence" value="ECO:0007669"/>
    <property type="project" value="Ensembl"/>
</dbReference>
<dbReference type="GO" id="GO:0048278">
    <property type="term" value="P:vesicle docking"/>
    <property type="evidence" value="ECO:0000250"/>
    <property type="project" value="UniProtKB"/>
</dbReference>
<dbReference type="GO" id="GO:0006906">
    <property type="term" value="P:vesicle fusion"/>
    <property type="evidence" value="ECO:0000250"/>
    <property type="project" value="UniProtKB"/>
</dbReference>
<dbReference type="GO" id="GO:0019076">
    <property type="term" value="P:viral release from host cell"/>
    <property type="evidence" value="ECO:0007669"/>
    <property type="project" value="Ensembl"/>
</dbReference>
<dbReference type="InterPro" id="IPR001612">
    <property type="entry name" value="Caveolin"/>
</dbReference>
<dbReference type="InterPro" id="IPR018361">
    <property type="entry name" value="Caveolin_CS"/>
</dbReference>
<dbReference type="PANTHER" id="PTHR10844">
    <property type="entry name" value="CAVEOLIN"/>
    <property type="match status" value="1"/>
</dbReference>
<dbReference type="PANTHER" id="PTHR10844:SF3">
    <property type="entry name" value="CAVEOLIN-2"/>
    <property type="match status" value="1"/>
</dbReference>
<dbReference type="Pfam" id="PF01146">
    <property type="entry name" value="Caveolin"/>
    <property type="match status" value="1"/>
</dbReference>
<dbReference type="PROSITE" id="PS01210">
    <property type="entry name" value="CAVEOLIN"/>
    <property type="match status" value="1"/>
</dbReference>
<proteinExistence type="inferred from homology"/>
<accession>Q07E26</accession>
<keyword id="KW-1003">Cell membrane</keyword>
<keyword id="KW-0963">Cytoplasm</keyword>
<keyword id="KW-0333">Golgi apparatus</keyword>
<keyword id="KW-0472">Membrane</keyword>
<keyword id="KW-0539">Nucleus</keyword>
<keyword id="KW-0597">Phosphoprotein</keyword>
<keyword id="KW-1185">Reference proteome</keyword>
<protein>
    <recommendedName>
        <fullName>Caveolin-2</fullName>
    </recommendedName>
</protein>
<feature type="chain" id="PRO_0000260381" description="Caveolin-2">
    <location>
        <begin position="1"/>
        <end position="162"/>
    </location>
</feature>
<feature type="topological domain" description="Cytoplasmic" evidence="4">
    <location>
        <begin position="1"/>
        <end position="86"/>
    </location>
</feature>
<feature type="intramembrane region" description="Helical" evidence="4">
    <location>
        <begin position="87"/>
        <end position="107"/>
    </location>
</feature>
<feature type="topological domain" description="Cytoplasmic" evidence="4">
    <location>
        <begin position="108"/>
        <end position="162"/>
    </location>
</feature>
<feature type="modified residue" description="Phosphotyrosine; by SRC" evidence="2">
    <location>
        <position position="19"/>
    </location>
</feature>
<feature type="modified residue" description="Phosphoserine" evidence="3">
    <location>
        <position position="20"/>
    </location>
</feature>
<feature type="modified residue" description="Phosphoserine" evidence="2">
    <location>
        <position position="23"/>
    </location>
</feature>
<feature type="modified residue" description="Phosphotyrosine; by SRC" evidence="2">
    <location>
        <position position="27"/>
    </location>
</feature>
<feature type="modified residue" description="Phosphoserine" evidence="2">
    <location>
        <position position="36"/>
    </location>
</feature>